<sequence>MTRRRLLHAGTLAGVAALLPAAALAAPSQCGPWPLWSAFVDKHIQRDGRVVDFLNPDQRSTSEGQSYALFFALVNNDQVLFDKVLSWTRHNLCGGRPDLNLPAWLWGRDGSGAWRVLDANTASDGELWIAYALLEAGRLWSRPGFLKAGQQMLQLIRTQEVATLPGLGPMLLPGRTGFVDNGRWTLNPSYLPIQVLRRCANADPKGPWAAIAANSARVLRDSAPVGFAPDWTVWDGKTFNADPKRGNVGSYDAIRVYLWAGMLDAGEPLRARLLQDLSGPADLLAAQQTPAEKIDTARGVGTGALPVGFSAALLPYLSALGKPALLKAQAQRVPAATQPAAAALPYFERTLALFGQGWLENRYRFAADGRLLPAWRTPACAATT</sequence>
<evidence type="ECO:0000250" key="1"/>
<evidence type="ECO:0000255" key="2"/>
<evidence type="ECO:0000305" key="3"/>
<reference key="1">
    <citation type="journal article" date="2002" name="Nature">
        <title>Comparison of the genomes of two Xanthomonas pathogens with differing host specificities.</title>
        <authorList>
            <person name="da Silva A.C.R."/>
            <person name="Ferro J.A."/>
            <person name="Reinach F.C."/>
            <person name="Farah C.S."/>
            <person name="Furlan L.R."/>
            <person name="Quaggio R.B."/>
            <person name="Monteiro-Vitorello C.B."/>
            <person name="Van Sluys M.A."/>
            <person name="Almeida N.F. Jr."/>
            <person name="Alves L.M.C."/>
            <person name="do Amaral A.M."/>
            <person name="Bertolini M.C."/>
            <person name="Camargo L.E.A."/>
            <person name="Camarotte G."/>
            <person name="Cannavan F."/>
            <person name="Cardozo J."/>
            <person name="Chambergo F."/>
            <person name="Ciapina L.P."/>
            <person name="Cicarelli R.M.B."/>
            <person name="Coutinho L.L."/>
            <person name="Cursino-Santos J.R."/>
            <person name="El-Dorry H."/>
            <person name="Faria J.B."/>
            <person name="Ferreira A.J.S."/>
            <person name="Ferreira R.C.C."/>
            <person name="Ferro M.I.T."/>
            <person name="Formighieri E.F."/>
            <person name="Franco M.C."/>
            <person name="Greggio C.C."/>
            <person name="Gruber A."/>
            <person name="Katsuyama A.M."/>
            <person name="Kishi L.T."/>
            <person name="Leite R.P."/>
            <person name="Lemos E.G.M."/>
            <person name="Lemos M.V.F."/>
            <person name="Locali E.C."/>
            <person name="Machado M.A."/>
            <person name="Madeira A.M.B.N."/>
            <person name="Martinez-Rossi N.M."/>
            <person name="Martins E.C."/>
            <person name="Meidanis J."/>
            <person name="Menck C.F.M."/>
            <person name="Miyaki C.Y."/>
            <person name="Moon D.H."/>
            <person name="Moreira L.M."/>
            <person name="Novo M.T.M."/>
            <person name="Okura V.K."/>
            <person name="Oliveira M.C."/>
            <person name="Oliveira V.R."/>
            <person name="Pereira H.A."/>
            <person name="Rossi A."/>
            <person name="Sena J.A.D."/>
            <person name="Silva C."/>
            <person name="de Souza R.F."/>
            <person name="Spinola L.A.F."/>
            <person name="Takita M.A."/>
            <person name="Tamura R.E."/>
            <person name="Teixeira E.C."/>
            <person name="Tezza R.I.D."/>
            <person name="Trindade dos Santos M."/>
            <person name="Truffi D."/>
            <person name="Tsai S.M."/>
            <person name="White F.F."/>
            <person name="Setubal J.C."/>
            <person name="Kitajima J.P."/>
        </authorList>
    </citation>
    <scope>NUCLEOTIDE SEQUENCE [LARGE SCALE GENOMIC DNA]</scope>
    <source>
        <strain>306</strain>
    </source>
</reference>
<comment type="function">
    <text evidence="1">Hydrolyzes carboxymethylcellulose.</text>
</comment>
<comment type="catalytic activity">
    <reaction>
        <text>Endohydrolysis of (1-&gt;4)-beta-D-glucosidic linkages in cellulose, lichenin and cereal beta-D-glucans.</text>
        <dbReference type="EC" id="3.2.1.4"/>
    </reaction>
</comment>
<comment type="pathway">
    <text>Glycan metabolism; bacterial cellulose biosynthesis.</text>
</comment>
<comment type="subcellular location">
    <subcellularLocation>
        <location evidence="1">Secreted</location>
    </subcellularLocation>
</comment>
<comment type="similarity">
    <text evidence="3">Belongs to the glycosyl hydrolase 8 (cellulase D) family.</text>
</comment>
<feature type="signal peptide" evidence="2">
    <location>
        <begin position="1"/>
        <end position="25"/>
    </location>
</feature>
<feature type="chain" id="PRO_0000007943" description="Endoglucanase">
    <location>
        <begin position="26"/>
        <end position="384"/>
    </location>
</feature>
<feature type="active site" description="Proton donor" evidence="1">
    <location>
        <position position="63"/>
    </location>
</feature>
<feature type="active site" description="Nucleophile" evidence="2">
    <location>
        <position position="124"/>
    </location>
</feature>
<protein>
    <recommendedName>
        <fullName>Endoglucanase</fullName>
        <ecNumber>3.2.1.4</ecNumber>
    </recommendedName>
    <alternativeName>
        <fullName>Carboxymethylcellulase</fullName>
        <shortName>CMCase</shortName>
    </alternativeName>
    <alternativeName>
        <fullName>Cellulase</fullName>
    </alternativeName>
    <alternativeName>
        <fullName>Endo-1,4-beta-glucanase</fullName>
    </alternativeName>
</protein>
<accession>P58935</accession>
<proteinExistence type="inferred from homology"/>
<organism>
    <name type="scientific">Xanthomonas axonopodis pv. citri (strain 306)</name>
    <dbReference type="NCBI Taxonomy" id="190486"/>
    <lineage>
        <taxon>Bacteria</taxon>
        <taxon>Pseudomonadati</taxon>
        <taxon>Pseudomonadota</taxon>
        <taxon>Gammaproteobacteria</taxon>
        <taxon>Lysobacterales</taxon>
        <taxon>Lysobacteraceae</taxon>
        <taxon>Xanthomonas</taxon>
    </lineage>
</organism>
<gene>
    <name type="primary">bcsZ</name>
    <name type="ordered locus">XAC3516</name>
</gene>
<keyword id="KW-0119">Carbohydrate metabolism</keyword>
<keyword id="KW-0136">Cellulose degradation</keyword>
<keyword id="KW-0326">Glycosidase</keyword>
<keyword id="KW-0378">Hydrolase</keyword>
<keyword id="KW-0624">Polysaccharide degradation</keyword>
<keyword id="KW-0964">Secreted</keyword>
<keyword id="KW-0732">Signal</keyword>
<dbReference type="EC" id="3.2.1.4"/>
<dbReference type="EMBL" id="AE008923">
    <property type="protein sequence ID" value="AAM38359.1"/>
    <property type="molecule type" value="Genomic_DNA"/>
</dbReference>
<dbReference type="SMR" id="P58935"/>
<dbReference type="CAZy" id="GH8">
    <property type="family name" value="Glycoside Hydrolase Family 8"/>
</dbReference>
<dbReference type="KEGG" id="xac:XAC3516"/>
<dbReference type="eggNOG" id="COG3405">
    <property type="taxonomic scope" value="Bacteria"/>
</dbReference>
<dbReference type="HOGENOM" id="CLU_037297_0_0_6"/>
<dbReference type="UniPathway" id="UPA00694"/>
<dbReference type="Proteomes" id="UP000000576">
    <property type="component" value="Chromosome"/>
</dbReference>
<dbReference type="GO" id="GO:0005576">
    <property type="term" value="C:extracellular region"/>
    <property type="evidence" value="ECO:0007669"/>
    <property type="project" value="UniProtKB-SubCell"/>
</dbReference>
<dbReference type="GO" id="GO:0008810">
    <property type="term" value="F:cellulase activity"/>
    <property type="evidence" value="ECO:0007669"/>
    <property type="project" value="UniProtKB-EC"/>
</dbReference>
<dbReference type="GO" id="GO:0030245">
    <property type="term" value="P:cellulose catabolic process"/>
    <property type="evidence" value="ECO:0007669"/>
    <property type="project" value="UniProtKB-KW"/>
</dbReference>
<dbReference type="Gene3D" id="1.50.10.10">
    <property type="match status" value="1"/>
</dbReference>
<dbReference type="InterPro" id="IPR008928">
    <property type="entry name" value="6-hairpin_glycosidase_sf"/>
</dbReference>
<dbReference type="InterPro" id="IPR012341">
    <property type="entry name" value="6hp_glycosidase-like_sf"/>
</dbReference>
<dbReference type="InterPro" id="IPR002037">
    <property type="entry name" value="Glyco_hydro_8"/>
</dbReference>
<dbReference type="NCBIfam" id="NF008305">
    <property type="entry name" value="PRK11097.1"/>
    <property type="match status" value="1"/>
</dbReference>
<dbReference type="Pfam" id="PF01270">
    <property type="entry name" value="Glyco_hydro_8"/>
    <property type="match status" value="1"/>
</dbReference>
<dbReference type="PRINTS" id="PR00735">
    <property type="entry name" value="GLHYDRLASE8"/>
</dbReference>
<dbReference type="SUPFAM" id="SSF48208">
    <property type="entry name" value="Six-hairpin glycosidases"/>
    <property type="match status" value="1"/>
</dbReference>
<name>GUN_XANAC</name>